<accession>Q863A4</accession>
<sequence length="420" mass="48538">MPLQVSDYSWQQTKTAVFLSLPLKGVCVRDTDVFCTENYLKVNFPPFLFEAFLYAPIDDESSKAKIGNDTIVFTLYKKEAAMWETLSVTGVDKETMQRIREKSILQAQERAKEATEAKAAAKREDQKYALSVMMKIEEEERKKIEDMKENERIKATKELEAWKEYQRKAEEHKKIQREEKLCQKEKQIKEERKKLKYKSLTRNSASRNLAPKGRNSENIFTEKLKEDSIPAPRSVGSIKINFTPRVFPTALRESQVAEEEEWLHKQAEARRAMNTDIAELCDLKEEEKNPEWLKDKGNKLFATENYLAAINAYNLAIRLNNKMPLLYLNRAACHLKLKNLHKAIEDSSKALELLMPPVTDNANARMKAHVRRGTAFCQLELYVEGLQDYEAALKIDPSNKIVQIDAEKIRNVIQGTELKS</sequence>
<proteinExistence type="inferred from homology"/>
<dbReference type="EMBL" id="AY178618">
    <property type="protein sequence ID" value="AAO22537.1"/>
    <property type="molecule type" value="Genomic_DNA"/>
</dbReference>
<dbReference type="EMBL" id="AY178610">
    <property type="protein sequence ID" value="AAO22537.1"/>
    <property type="status" value="JOINED"/>
    <property type="molecule type" value="Genomic_DNA"/>
</dbReference>
<dbReference type="EMBL" id="AY178611">
    <property type="protein sequence ID" value="AAO22537.1"/>
    <property type="status" value="JOINED"/>
    <property type="molecule type" value="Genomic_DNA"/>
</dbReference>
<dbReference type="EMBL" id="AY178612">
    <property type="protein sequence ID" value="AAO22537.1"/>
    <property type="status" value="JOINED"/>
    <property type="molecule type" value="Genomic_DNA"/>
</dbReference>
<dbReference type="EMBL" id="AY178613">
    <property type="protein sequence ID" value="AAO22537.1"/>
    <property type="status" value="JOINED"/>
    <property type="molecule type" value="Genomic_DNA"/>
</dbReference>
<dbReference type="EMBL" id="AY178614">
    <property type="protein sequence ID" value="AAO22537.1"/>
    <property type="status" value="JOINED"/>
    <property type="molecule type" value="Genomic_DNA"/>
</dbReference>
<dbReference type="EMBL" id="AY178615">
    <property type="protein sequence ID" value="AAO22537.1"/>
    <property type="status" value="JOINED"/>
    <property type="molecule type" value="Genomic_DNA"/>
</dbReference>
<dbReference type="EMBL" id="AY178616">
    <property type="protein sequence ID" value="AAO22537.1"/>
    <property type="status" value="JOINED"/>
    <property type="molecule type" value="Genomic_DNA"/>
</dbReference>
<dbReference type="EMBL" id="AY178617">
    <property type="protein sequence ID" value="AAO22537.1"/>
    <property type="status" value="JOINED"/>
    <property type="molecule type" value="Genomic_DNA"/>
</dbReference>
<dbReference type="RefSeq" id="XP_054307936.1">
    <property type="nucleotide sequence ID" value="XM_054451961.2"/>
</dbReference>
<dbReference type="SMR" id="Q863A4"/>
<dbReference type="GeneID" id="129014479"/>
<dbReference type="GO" id="GO:0005737">
    <property type="term" value="C:cytoplasm"/>
    <property type="evidence" value="ECO:0000250"/>
    <property type="project" value="UniProtKB"/>
</dbReference>
<dbReference type="GO" id="GO:0120293">
    <property type="term" value="C:dynein axonemal particle"/>
    <property type="evidence" value="ECO:0000250"/>
    <property type="project" value="UniProtKB"/>
</dbReference>
<dbReference type="GO" id="GO:0005576">
    <property type="term" value="C:extracellular region"/>
    <property type="evidence" value="ECO:0007669"/>
    <property type="project" value="GOC"/>
</dbReference>
<dbReference type="GO" id="GO:0043005">
    <property type="term" value="C:neuron projection"/>
    <property type="evidence" value="ECO:0007669"/>
    <property type="project" value="UniProtKB-SubCell"/>
</dbReference>
<dbReference type="GO" id="GO:0005634">
    <property type="term" value="C:nucleus"/>
    <property type="evidence" value="ECO:0000250"/>
    <property type="project" value="UniProtKB"/>
</dbReference>
<dbReference type="GO" id="GO:0030331">
    <property type="term" value="F:nuclear estrogen receptor binding"/>
    <property type="evidence" value="ECO:0000250"/>
    <property type="project" value="UniProtKB"/>
</dbReference>
<dbReference type="GO" id="GO:0003341">
    <property type="term" value="P:cilium movement"/>
    <property type="evidence" value="ECO:0000250"/>
    <property type="project" value="UniProtKB"/>
</dbReference>
<dbReference type="GO" id="GO:0007368">
    <property type="term" value="P:determination of left/right symmetry"/>
    <property type="evidence" value="ECO:0000250"/>
    <property type="project" value="UniProtKB"/>
</dbReference>
<dbReference type="GO" id="GO:0003351">
    <property type="term" value="P:epithelial cilium movement involved in extracellular fluid movement"/>
    <property type="evidence" value="ECO:0007669"/>
    <property type="project" value="TreeGrafter"/>
</dbReference>
<dbReference type="GO" id="GO:0007507">
    <property type="term" value="P:heart development"/>
    <property type="evidence" value="ECO:0007669"/>
    <property type="project" value="TreeGrafter"/>
</dbReference>
<dbReference type="GO" id="GO:0036159">
    <property type="term" value="P:inner dynein arm assembly"/>
    <property type="evidence" value="ECO:0000250"/>
    <property type="project" value="UniProtKB"/>
</dbReference>
<dbReference type="GO" id="GO:0001764">
    <property type="term" value="P:neuron migration"/>
    <property type="evidence" value="ECO:0000250"/>
    <property type="project" value="UniProtKB"/>
</dbReference>
<dbReference type="GO" id="GO:0036158">
    <property type="term" value="P:outer dynein arm assembly"/>
    <property type="evidence" value="ECO:0000250"/>
    <property type="project" value="UniProtKB"/>
</dbReference>
<dbReference type="GO" id="GO:0033146">
    <property type="term" value="P:regulation of intracellular estrogen receptor signaling pathway"/>
    <property type="evidence" value="ECO:0000250"/>
    <property type="project" value="UniProtKB"/>
</dbReference>
<dbReference type="GO" id="GO:0061136">
    <property type="term" value="P:regulation of proteasomal protein catabolic process"/>
    <property type="evidence" value="ECO:0000250"/>
    <property type="project" value="UniProtKB"/>
</dbReference>
<dbReference type="CDD" id="cd06469">
    <property type="entry name" value="p23_DYX1C1_like"/>
    <property type="match status" value="1"/>
</dbReference>
<dbReference type="FunFam" id="1.25.40.10:FF:000176">
    <property type="entry name" value="dynein assembly factor 4, axonemal isoform X1"/>
    <property type="match status" value="1"/>
</dbReference>
<dbReference type="FunFam" id="2.60.40.790:FF:000015">
    <property type="entry name" value="dynein assembly factor 4, axonemal isoform X1"/>
    <property type="match status" value="1"/>
</dbReference>
<dbReference type="Gene3D" id="2.60.40.790">
    <property type="match status" value="1"/>
</dbReference>
<dbReference type="Gene3D" id="1.25.40.10">
    <property type="entry name" value="Tetratricopeptide repeat domain"/>
    <property type="match status" value="1"/>
</dbReference>
<dbReference type="InterPro" id="IPR007052">
    <property type="entry name" value="CS_dom"/>
</dbReference>
<dbReference type="InterPro" id="IPR037894">
    <property type="entry name" value="CS_DYX1C1"/>
</dbReference>
<dbReference type="InterPro" id="IPR052004">
    <property type="entry name" value="Dynein_assembly_factor_4"/>
</dbReference>
<dbReference type="InterPro" id="IPR008978">
    <property type="entry name" value="HSP20-like_chaperone"/>
</dbReference>
<dbReference type="InterPro" id="IPR011990">
    <property type="entry name" value="TPR-like_helical_dom_sf"/>
</dbReference>
<dbReference type="InterPro" id="IPR019734">
    <property type="entry name" value="TPR_rpt"/>
</dbReference>
<dbReference type="PANTHER" id="PTHR46492">
    <property type="entry name" value="DYNEIN ASSEMBLY FACTOR 4, AXONEMAL"/>
    <property type="match status" value="1"/>
</dbReference>
<dbReference type="PANTHER" id="PTHR46492:SF1">
    <property type="entry name" value="DYNEIN AXONEMAL ASSEMBLY FACTOR 4"/>
    <property type="match status" value="1"/>
</dbReference>
<dbReference type="Pfam" id="PF04969">
    <property type="entry name" value="CS"/>
    <property type="match status" value="1"/>
</dbReference>
<dbReference type="SMART" id="SM00028">
    <property type="entry name" value="TPR"/>
    <property type="match status" value="3"/>
</dbReference>
<dbReference type="SUPFAM" id="SSF49764">
    <property type="entry name" value="HSP20-like chaperones"/>
    <property type="match status" value="1"/>
</dbReference>
<dbReference type="SUPFAM" id="SSF48452">
    <property type="entry name" value="TPR-like"/>
    <property type="match status" value="1"/>
</dbReference>
<dbReference type="PROSITE" id="PS51203">
    <property type="entry name" value="CS"/>
    <property type="match status" value="1"/>
</dbReference>
<dbReference type="PROSITE" id="PS50005">
    <property type="entry name" value="TPR"/>
    <property type="match status" value="3"/>
</dbReference>
<dbReference type="PROSITE" id="PS50293">
    <property type="entry name" value="TPR_REGION"/>
    <property type="match status" value="1"/>
</dbReference>
<name>DAAF4_PONPY</name>
<evidence type="ECO:0000250" key="1"/>
<evidence type="ECO:0000250" key="2">
    <source>
        <dbReference type="UniProtKB" id="Q5VJS5"/>
    </source>
</evidence>
<evidence type="ECO:0000250" key="3">
    <source>
        <dbReference type="UniProtKB" id="Q6AZN0"/>
    </source>
</evidence>
<evidence type="ECO:0000250" key="4">
    <source>
        <dbReference type="UniProtKB" id="Q8R368"/>
    </source>
</evidence>
<evidence type="ECO:0000250" key="5">
    <source>
        <dbReference type="UniProtKB" id="Q8WXU2"/>
    </source>
</evidence>
<evidence type="ECO:0000255" key="6">
    <source>
        <dbReference type="PROSITE-ProRule" id="PRU00547"/>
    </source>
</evidence>
<gene>
    <name evidence="5" type="primary">DNAAF4</name>
    <name type="synonym">DYX1C1</name>
    <name type="synonym">EKN1</name>
</gene>
<organism>
    <name type="scientific">Pongo pygmaeus</name>
    <name type="common">Bornean orangutan</name>
    <dbReference type="NCBI Taxonomy" id="9600"/>
    <lineage>
        <taxon>Eukaryota</taxon>
        <taxon>Metazoa</taxon>
        <taxon>Chordata</taxon>
        <taxon>Craniata</taxon>
        <taxon>Vertebrata</taxon>
        <taxon>Euteleostomi</taxon>
        <taxon>Mammalia</taxon>
        <taxon>Eutheria</taxon>
        <taxon>Euarchontoglires</taxon>
        <taxon>Primates</taxon>
        <taxon>Haplorrhini</taxon>
        <taxon>Catarrhini</taxon>
        <taxon>Hominidae</taxon>
        <taxon>Pongo</taxon>
    </lineage>
</organism>
<feature type="chain" id="PRO_0000106288" description="Dynein axonemal assembly factor 4">
    <location>
        <begin position="1"/>
        <end position="420"/>
    </location>
</feature>
<feature type="domain" description="CS" evidence="6">
    <location>
        <begin position="3"/>
        <end position="87"/>
    </location>
</feature>
<feature type="repeat" description="TPR 1">
    <location>
        <begin position="290"/>
        <end position="323"/>
    </location>
</feature>
<feature type="repeat" description="TPR 2">
    <location>
        <begin position="324"/>
        <end position="357"/>
    </location>
</feature>
<feature type="repeat" description="TPR 3">
    <location>
        <begin position="366"/>
        <end position="399"/>
    </location>
</feature>
<feature type="region of interest" description="Mediates interaction with ESR1 and STUB1" evidence="1">
    <location>
        <begin position="7"/>
        <end position="103"/>
    </location>
</feature>
<keyword id="KW-0966">Cell projection</keyword>
<keyword id="KW-0963">Cytoplasm</keyword>
<keyword id="KW-0524">Neurogenesis</keyword>
<keyword id="KW-0539">Nucleus</keyword>
<keyword id="KW-0677">Repeat</keyword>
<keyword id="KW-0802">TPR repeat</keyword>
<comment type="function">
    <text evidence="4 5">Involved in neuronal migration during development of the cerebral neocortex. May regulate the stability and proteasomal degradation of the estrogen receptors that play an important role in neuronal differentiation, survival and plasticity. Axonemal dynein assembly factor required for ciliary motility (By similarity).</text>
</comment>
<comment type="subunit">
    <text evidence="4 5">Interacts with ZMYND10 (By similarity). Interacts with STUB1 (By similarity). Interacts with ESR1 and ESR2. Interacts with DNAAF2 (By similarity). Interacts with CCT3, CCT4, CCT5 and CCT8 (By similarity). Interacts with DNAAF6/PIH1D3 (By similarity).</text>
</comment>
<comment type="subcellular location">
    <subcellularLocation>
        <location evidence="5">Nucleus</location>
    </subcellularLocation>
    <subcellularLocation>
        <location evidence="2">Cytoplasm</location>
    </subcellularLocation>
    <subcellularLocation>
        <location evidence="2">Cell projection</location>
        <location evidence="2">Neuron projection</location>
    </subcellularLocation>
    <subcellularLocation>
        <location evidence="3">Dynein axonemal particle</location>
    </subcellularLocation>
</comment>
<protein>
    <recommendedName>
        <fullName evidence="5">Dynein axonemal assembly factor 4</fullName>
    </recommendedName>
    <alternativeName>
        <fullName evidence="5">Dyslexia susceptibility 1 candidate gene 1 protein homolog</fullName>
    </alternativeName>
</protein>
<reference key="1">
    <citation type="journal article" date="2003" name="Proc. Natl. Acad. Sci. U.S.A.">
        <title>A candidate gene for developmental dyslexia encodes a nuclear tetratricopeptide repeat domain protein dynamically regulated in brain.</title>
        <authorList>
            <person name="Taipale M."/>
            <person name="Kaminen N."/>
            <person name="Nopola-Hemmi J."/>
            <person name="Haltia T."/>
            <person name="Myllyluoma B."/>
            <person name="Lyytinen H."/>
            <person name="Muller K."/>
            <person name="Kaaranen M."/>
            <person name="Lindsberg P.J."/>
            <person name="Hannula-Jouppi K."/>
            <person name="Kere J."/>
        </authorList>
    </citation>
    <scope>NUCLEOTIDE SEQUENCE [GENOMIC DNA]</scope>
</reference>